<name>PXPA_BURL3</name>
<gene>
    <name evidence="1" type="primary">pxpA</name>
    <name type="ordered locus">Bcep18194_A6386</name>
</gene>
<organism>
    <name type="scientific">Burkholderia lata (strain ATCC 17760 / DSM 23089 / LMG 22485 / NCIMB 9086 / R18194 / 383)</name>
    <dbReference type="NCBI Taxonomy" id="482957"/>
    <lineage>
        <taxon>Bacteria</taxon>
        <taxon>Pseudomonadati</taxon>
        <taxon>Pseudomonadota</taxon>
        <taxon>Betaproteobacteria</taxon>
        <taxon>Burkholderiales</taxon>
        <taxon>Burkholderiaceae</taxon>
        <taxon>Burkholderia</taxon>
        <taxon>Burkholderia cepacia complex</taxon>
    </lineage>
</organism>
<proteinExistence type="inferred from homology"/>
<accession>Q39C36</accession>
<feature type="chain" id="PRO_1000045192" description="5-oxoprolinase subunit A">
    <location>
        <begin position="1"/>
        <end position="254"/>
    </location>
</feature>
<sequence length="254" mass="26788">MQIDLNADLGEGCGSDEALLDLVTSANIACGWHAGGANAMRDCVRWAVQKGVAIGAHPSFHDPENFGRKEMQLPASDIYAGVLYQLGALSAIAQAEGGRIAHVKPHGALYNQAARDPMIADAVVSAIRDFDPSLAVFGLANSVFVAAARHAGLAAVEEVFADRGYRADGSLVPRNQPGALIDDEDTMIARTLDMVRSRQVRAIGGEWVMLNAQTVCLHGDGPHALVFAKRIRAALEAVGVDVVAPGMLQADERA</sequence>
<evidence type="ECO:0000255" key="1">
    <source>
        <dbReference type="HAMAP-Rule" id="MF_00691"/>
    </source>
</evidence>
<comment type="function">
    <text evidence="1">Catalyzes the cleavage of 5-oxoproline to form L-glutamate coupled to the hydrolysis of ATP to ADP and inorganic phosphate.</text>
</comment>
<comment type="catalytic activity">
    <reaction evidence="1">
        <text>5-oxo-L-proline + ATP + 2 H2O = L-glutamate + ADP + phosphate + H(+)</text>
        <dbReference type="Rhea" id="RHEA:10348"/>
        <dbReference type="ChEBI" id="CHEBI:15377"/>
        <dbReference type="ChEBI" id="CHEBI:15378"/>
        <dbReference type="ChEBI" id="CHEBI:29985"/>
        <dbReference type="ChEBI" id="CHEBI:30616"/>
        <dbReference type="ChEBI" id="CHEBI:43474"/>
        <dbReference type="ChEBI" id="CHEBI:58402"/>
        <dbReference type="ChEBI" id="CHEBI:456216"/>
        <dbReference type="EC" id="3.5.2.9"/>
    </reaction>
</comment>
<comment type="subunit">
    <text evidence="1">Forms a complex composed of PxpA, PxpB and PxpC.</text>
</comment>
<comment type="similarity">
    <text evidence="1">Belongs to the LamB/PxpA family.</text>
</comment>
<protein>
    <recommendedName>
        <fullName evidence="1">5-oxoprolinase subunit A</fullName>
        <shortName evidence="1">5-OPase subunit A</shortName>
        <ecNumber evidence="1">3.5.2.9</ecNumber>
    </recommendedName>
    <alternativeName>
        <fullName evidence="1">5-oxoprolinase (ATP-hydrolyzing) subunit A</fullName>
    </alternativeName>
</protein>
<keyword id="KW-0067">ATP-binding</keyword>
<keyword id="KW-0378">Hydrolase</keyword>
<keyword id="KW-0547">Nucleotide-binding</keyword>
<reference key="1">
    <citation type="submission" date="2005-10" db="EMBL/GenBank/DDBJ databases">
        <title>Complete sequence of chromosome 1 of Burkholderia sp. 383.</title>
        <authorList>
            <consortium name="US DOE Joint Genome Institute"/>
            <person name="Copeland A."/>
            <person name="Lucas S."/>
            <person name="Lapidus A."/>
            <person name="Barry K."/>
            <person name="Detter J.C."/>
            <person name="Glavina T."/>
            <person name="Hammon N."/>
            <person name="Israni S."/>
            <person name="Pitluck S."/>
            <person name="Chain P."/>
            <person name="Malfatti S."/>
            <person name="Shin M."/>
            <person name="Vergez L."/>
            <person name="Schmutz J."/>
            <person name="Larimer F."/>
            <person name="Land M."/>
            <person name="Kyrpides N."/>
            <person name="Lykidis A."/>
            <person name="Richardson P."/>
        </authorList>
    </citation>
    <scope>NUCLEOTIDE SEQUENCE [LARGE SCALE GENOMIC DNA]</scope>
    <source>
        <strain>ATCC 17760 / DSM 23089 / LMG 22485 / NCIMB 9086 / R18194 / 383</strain>
    </source>
</reference>
<dbReference type="EC" id="3.5.2.9" evidence="1"/>
<dbReference type="EMBL" id="CP000151">
    <property type="protein sequence ID" value="ABB09980.1"/>
    <property type="molecule type" value="Genomic_DNA"/>
</dbReference>
<dbReference type="RefSeq" id="WP_011353486.1">
    <property type="nucleotide sequence ID" value="NZ_CABVQI010000026.1"/>
</dbReference>
<dbReference type="SMR" id="Q39C36"/>
<dbReference type="GeneID" id="93193880"/>
<dbReference type="KEGG" id="bur:Bcep18194_A6386"/>
<dbReference type="PATRIC" id="fig|482957.22.peg.3410"/>
<dbReference type="HOGENOM" id="CLU_069535_0_0_4"/>
<dbReference type="Proteomes" id="UP000002705">
    <property type="component" value="Chromosome 1"/>
</dbReference>
<dbReference type="GO" id="GO:0017168">
    <property type="term" value="F:5-oxoprolinase (ATP-hydrolyzing) activity"/>
    <property type="evidence" value="ECO:0007669"/>
    <property type="project" value="UniProtKB-UniRule"/>
</dbReference>
<dbReference type="GO" id="GO:0005524">
    <property type="term" value="F:ATP binding"/>
    <property type="evidence" value="ECO:0007669"/>
    <property type="project" value="UniProtKB-UniRule"/>
</dbReference>
<dbReference type="GO" id="GO:0005975">
    <property type="term" value="P:carbohydrate metabolic process"/>
    <property type="evidence" value="ECO:0007669"/>
    <property type="project" value="InterPro"/>
</dbReference>
<dbReference type="CDD" id="cd10800">
    <property type="entry name" value="LamB_YcsF_YbgL_like"/>
    <property type="match status" value="1"/>
</dbReference>
<dbReference type="Gene3D" id="3.20.20.370">
    <property type="entry name" value="Glycoside hydrolase/deacetylase"/>
    <property type="match status" value="1"/>
</dbReference>
<dbReference type="HAMAP" id="MF_00691">
    <property type="entry name" value="PxpA"/>
    <property type="match status" value="1"/>
</dbReference>
<dbReference type="InterPro" id="IPR011330">
    <property type="entry name" value="Glyco_hydro/deAcase_b/a-brl"/>
</dbReference>
<dbReference type="InterPro" id="IPR005501">
    <property type="entry name" value="LamB/YcsF/PxpA-like"/>
</dbReference>
<dbReference type="NCBIfam" id="NF003814">
    <property type="entry name" value="PRK05406.1-3"/>
    <property type="match status" value="1"/>
</dbReference>
<dbReference type="NCBIfam" id="NF003815">
    <property type="entry name" value="PRK05406.1-4"/>
    <property type="match status" value="1"/>
</dbReference>
<dbReference type="NCBIfam" id="NF003816">
    <property type="entry name" value="PRK05406.1-5"/>
    <property type="match status" value="1"/>
</dbReference>
<dbReference type="PANTHER" id="PTHR30292:SF0">
    <property type="entry name" value="5-OXOPROLINASE SUBUNIT A"/>
    <property type="match status" value="1"/>
</dbReference>
<dbReference type="PANTHER" id="PTHR30292">
    <property type="entry name" value="UNCHARACTERIZED PROTEIN YBGL-RELATED"/>
    <property type="match status" value="1"/>
</dbReference>
<dbReference type="Pfam" id="PF03746">
    <property type="entry name" value="LamB_YcsF"/>
    <property type="match status" value="1"/>
</dbReference>
<dbReference type="SUPFAM" id="SSF88713">
    <property type="entry name" value="Glycoside hydrolase/deacetylase"/>
    <property type="match status" value="1"/>
</dbReference>